<keyword id="KW-0687">Ribonucleoprotein</keyword>
<keyword id="KW-0689">Ribosomal protein</keyword>
<keyword id="KW-0694">RNA-binding</keyword>
<keyword id="KW-0699">rRNA-binding</keyword>
<dbReference type="EMBL" id="CP001176">
    <property type="protein sequence ID" value="ACK61841.1"/>
    <property type="molecule type" value="Genomic_DNA"/>
</dbReference>
<dbReference type="RefSeq" id="WP_001148024.1">
    <property type="nucleotide sequence ID" value="NZ_VEHB01000017.1"/>
</dbReference>
<dbReference type="SMR" id="B7HJ53"/>
<dbReference type="GeneID" id="92887808"/>
<dbReference type="KEGG" id="bcb:BCB4264_A0136"/>
<dbReference type="HOGENOM" id="CLU_083987_3_3_9"/>
<dbReference type="Proteomes" id="UP000007096">
    <property type="component" value="Chromosome"/>
</dbReference>
<dbReference type="GO" id="GO:0022625">
    <property type="term" value="C:cytosolic large ribosomal subunit"/>
    <property type="evidence" value="ECO:0007669"/>
    <property type="project" value="TreeGrafter"/>
</dbReference>
<dbReference type="GO" id="GO:0019843">
    <property type="term" value="F:rRNA binding"/>
    <property type="evidence" value="ECO:0007669"/>
    <property type="project" value="UniProtKB-UniRule"/>
</dbReference>
<dbReference type="GO" id="GO:0003735">
    <property type="term" value="F:structural constituent of ribosome"/>
    <property type="evidence" value="ECO:0007669"/>
    <property type="project" value="InterPro"/>
</dbReference>
<dbReference type="GO" id="GO:0006412">
    <property type="term" value="P:translation"/>
    <property type="evidence" value="ECO:0007669"/>
    <property type="project" value="UniProtKB-UniRule"/>
</dbReference>
<dbReference type="CDD" id="cd00336">
    <property type="entry name" value="Ribosomal_L22"/>
    <property type="match status" value="1"/>
</dbReference>
<dbReference type="FunFam" id="3.90.470.10:FF:000001">
    <property type="entry name" value="50S ribosomal protein L22"/>
    <property type="match status" value="1"/>
</dbReference>
<dbReference type="Gene3D" id="3.90.470.10">
    <property type="entry name" value="Ribosomal protein L22/L17"/>
    <property type="match status" value="1"/>
</dbReference>
<dbReference type="HAMAP" id="MF_01331_B">
    <property type="entry name" value="Ribosomal_uL22_B"/>
    <property type="match status" value="1"/>
</dbReference>
<dbReference type="InterPro" id="IPR001063">
    <property type="entry name" value="Ribosomal_uL22"/>
</dbReference>
<dbReference type="InterPro" id="IPR005727">
    <property type="entry name" value="Ribosomal_uL22_bac/chlpt-type"/>
</dbReference>
<dbReference type="InterPro" id="IPR047867">
    <property type="entry name" value="Ribosomal_uL22_bac/org-type"/>
</dbReference>
<dbReference type="InterPro" id="IPR018260">
    <property type="entry name" value="Ribosomal_uL22_CS"/>
</dbReference>
<dbReference type="InterPro" id="IPR036394">
    <property type="entry name" value="Ribosomal_uL22_sf"/>
</dbReference>
<dbReference type="NCBIfam" id="TIGR01044">
    <property type="entry name" value="rplV_bact"/>
    <property type="match status" value="1"/>
</dbReference>
<dbReference type="PANTHER" id="PTHR13501">
    <property type="entry name" value="CHLOROPLAST 50S RIBOSOMAL PROTEIN L22-RELATED"/>
    <property type="match status" value="1"/>
</dbReference>
<dbReference type="PANTHER" id="PTHR13501:SF8">
    <property type="entry name" value="LARGE RIBOSOMAL SUBUNIT PROTEIN UL22M"/>
    <property type="match status" value="1"/>
</dbReference>
<dbReference type="Pfam" id="PF00237">
    <property type="entry name" value="Ribosomal_L22"/>
    <property type="match status" value="1"/>
</dbReference>
<dbReference type="SUPFAM" id="SSF54843">
    <property type="entry name" value="Ribosomal protein L22"/>
    <property type="match status" value="1"/>
</dbReference>
<dbReference type="PROSITE" id="PS00464">
    <property type="entry name" value="RIBOSOMAL_L22"/>
    <property type="match status" value="1"/>
</dbReference>
<feature type="chain" id="PRO_1000142229" description="Large ribosomal subunit protein uL22">
    <location>
        <begin position="1"/>
        <end position="113"/>
    </location>
</feature>
<accession>B7HJ53</accession>
<proteinExistence type="inferred from homology"/>
<sequence>MQAKAVARTVRIAPRKVRLVVDLIRGKQVGEAIAILNHTPKTASPVVEKVLKSAIANAEHNYEMDINNLVVEKVFVDEGPTLKRFRPRAMGRASQINKRTSHITVVVSEKKEG</sequence>
<comment type="function">
    <text evidence="1">This protein binds specifically to 23S rRNA; its binding is stimulated by other ribosomal proteins, e.g. L4, L17, and L20. It is important during the early stages of 50S assembly. It makes multiple contacts with different domains of the 23S rRNA in the assembled 50S subunit and ribosome (By similarity).</text>
</comment>
<comment type="function">
    <text evidence="1">The globular domain of the protein is located near the polypeptide exit tunnel on the outside of the subunit, while an extended beta-hairpin is found that lines the wall of the exit tunnel in the center of the 70S ribosome.</text>
</comment>
<comment type="subunit">
    <text evidence="1">Part of the 50S ribosomal subunit.</text>
</comment>
<comment type="similarity">
    <text evidence="1">Belongs to the universal ribosomal protein uL22 family.</text>
</comment>
<evidence type="ECO:0000255" key="1">
    <source>
        <dbReference type="HAMAP-Rule" id="MF_01331"/>
    </source>
</evidence>
<evidence type="ECO:0000305" key="2"/>
<protein>
    <recommendedName>
        <fullName evidence="1">Large ribosomal subunit protein uL22</fullName>
    </recommendedName>
    <alternativeName>
        <fullName evidence="2">50S ribosomal protein L22</fullName>
    </alternativeName>
</protein>
<gene>
    <name evidence="1" type="primary">rplV</name>
    <name type="ordered locus">BCB4264_A0136</name>
</gene>
<reference key="1">
    <citation type="submission" date="2008-10" db="EMBL/GenBank/DDBJ databases">
        <title>Genome sequence of Bacillus cereus B4264.</title>
        <authorList>
            <person name="Dodson R.J."/>
            <person name="Durkin A.S."/>
            <person name="Rosovitz M.J."/>
            <person name="Rasko D.A."/>
            <person name="Hoffmaster A."/>
            <person name="Ravel J."/>
            <person name="Sutton G."/>
        </authorList>
    </citation>
    <scope>NUCLEOTIDE SEQUENCE [LARGE SCALE GENOMIC DNA]</scope>
    <source>
        <strain>B4264</strain>
    </source>
</reference>
<name>RL22_BACC4</name>
<organism>
    <name type="scientific">Bacillus cereus (strain B4264)</name>
    <dbReference type="NCBI Taxonomy" id="405532"/>
    <lineage>
        <taxon>Bacteria</taxon>
        <taxon>Bacillati</taxon>
        <taxon>Bacillota</taxon>
        <taxon>Bacilli</taxon>
        <taxon>Bacillales</taxon>
        <taxon>Bacillaceae</taxon>
        <taxon>Bacillus</taxon>
        <taxon>Bacillus cereus group</taxon>
    </lineage>
</organism>